<protein>
    <recommendedName>
        <fullName>Cytochrome b</fullName>
    </recommendedName>
    <alternativeName>
        <fullName>Complex III subunit 3</fullName>
    </alternativeName>
    <alternativeName>
        <fullName>Complex III subunit III</fullName>
    </alternativeName>
    <alternativeName>
        <fullName>Cytochrome b-c1 complex subunit 3</fullName>
    </alternativeName>
    <alternativeName>
        <fullName>Ubiquinol-cytochrome-c reductase complex cytochrome b subunit</fullName>
    </alternativeName>
</protein>
<geneLocation type="mitochondrion"/>
<proteinExistence type="inferred from homology"/>
<keyword id="KW-0249">Electron transport</keyword>
<keyword id="KW-0349">Heme</keyword>
<keyword id="KW-0408">Iron</keyword>
<keyword id="KW-0472">Membrane</keyword>
<keyword id="KW-0479">Metal-binding</keyword>
<keyword id="KW-0496">Mitochondrion</keyword>
<keyword id="KW-0999">Mitochondrion inner membrane</keyword>
<keyword id="KW-0679">Respiratory chain</keyword>
<keyword id="KW-0812">Transmembrane</keyword>
<keyword id="KW-1133">Transmembrane helix</keyword>
<keyword id="KW-0813">Transport</keyword>
<keyword id="KW-0830">Ubiquinone</keyword>
<organism>
    <name type="scientific">Sorex vagrans</name>
    <name type="common">Vagrant shrew</name>
    <dbReference type="NCBI Taxonomy" id="62905"/>
    <lineage>
        <taxon>Eukaryota</taxon>
        <taxon>Metazoa</taxon>
        <taxon>Chordata</taxon>
        <taxon>Craniata</taxon>
        <taxon>Vertebrata</taxon>
        <taxon>Euteleostomi</taxon>
        <taxon>Mammalia</taxon>
        <taxon>Eutheria</taxon>
        <taxon>Laurasiatheria</taxon>
        <taxon>Eulipotyphla</taxon>
        <taxon>Soricidae</taxon>
        <taxon>Soricinae</taxon>
        <taxon>Sorex</taxon>
    </lineage>
</organism>
<dbReference type="EMBL" id="AF154551">
    <property type="protein sequence ID" value="AAF28158.2"/>
    <property type="molecule type" value="Genomic_DNA"/>
</dbReference>
<dbReference type="EMBL" id="AJ000454">
    <property type="protein sequence ID" value="CAA04098.1"/>
    <property type="molecule type" value="Genomic_DNA"/>
</dbReference>
<dbReference type="EMBL" id="AJ000455">
    <property type="protein sequence ID" value="CAA04099.1"/>
    <property type="molecule type" value="Genomic_DNA"/>
</dbReference>
<dbReference type="SMR" id="O80019"/>
<dbReference type="GO" id="GO:0005743">
    <property type="term" value="C:mitochondrial inner membrane"/>
    <property type="evidence" value="ECO:0007669"/>
    <property type="project" value="UniProtKB-SubCell"/>
</dbReference>
<dbReference type="GO" id="GO:0045275">
    <property type="term" value="C:respiratory chain complex III"/>
    <property type="evidence" value="ECO:0007669"/>
    <property type="project" value="InterPro"/>
</dbReference>
<dbReference type="GO" id="GO:0046872">
    <property type="term" value="F:metal ion binding"/>
    <property type="evidence" value="ECO:0007669"/>
    <property type="project" value="UniProtKB-KW"/>
</dbReference>
<dbReference type="GO" id="GO:0008121">
    <property type="term" value="F:ubiquinol-cytochrome-c reductase activity"/>
    <property type="evidence" value="ECO:0007669"/>
    <property type="project" value="InterPro"/>
</dbReference>
<dbReference type="GO" id="GO:0006122">
    <property type="term" value="P:mitochondrial electron transport, ubiquinol to cytochrome c"/>
    <property type="evidence" value="ECO:0007669"/>
    <property type="project" value="TreeGrafter"/>
</dbReference>
<dbReference type="CDD" id="cd00290">
    <property type="entry name" value="cytochrome_b_C"/>
    <property type="match status" value="1"/>
</dbReference>
<dbReference type="CDD" id="cd00284">
    <property type="entry name" value="Cytochrome_b_N"/>
    <property type="match status" value="1"/>
</dbReference>
<dbReference type="FunFam" id="1.20.810.10:FF:000002">
    <property type="entry name" value="Cytochrome b"/>
    <property type="match status" value="1"/>
</dbReference>
<dbReference type="Gene3D" id="1.20.810.10">
    <property type="entry name" value="Cytochrome Bc1 Complex, Chain C"/>
    <property type="match status" value="1"/>
</dbReference>
<dbReference type="InterPro" id="IPR005798">
    <property type="entry name" value="Cyt_b/b6_C"/>
</dbReference>
<dbReference type="InterPro" id="IPR036150">
    <property type="entry name" value="Cyt_b/b6_C_sf"/>
</dbReference>
<dbReference type="InterPro" id="IPR005797">
    <property type="entry name" value="Cyt_b/b6_N"/>
</dbReference>
<dbReference type="InterPro" id="IPR027387">
    <property type="entry name" value="Cytb/b6-like_sf"/>
</dbReference>
<dbReference type="InterPro" id="IPR030689">
    <property type="entry name" value="Cytochrome_b"/>
</dbReference>
<dbReference type="InterPro" id="IPR048260">
    <property type="entry name" value="Cytochrome_b_C_euk/bac"/>
</dbReference>
<dbReference type="InterPro" id="IPR048259">
    <property type="entry name" value="Cytochrome_b_N_euk/bac"/>
</dbReference>
<dbReference type="InterPro" id="IPR016174">
    <property type="entry name" value="Di-haem_cyt_TM"/>
</dbReference>
<dbReference type="PANTHER" id="PTHR19271">
    <property type="entry name" value="CYTOCHROME B"/>
    <property type="match status" value="1"/>
</dbReference>
<dbReference type="PANTHER" id="PTHR19271:SF16">
    <property type="entry name" value="CYTOCHROME B"/>
    <property type="match status" value="1"/>
</dbReference>
<dbReference type="Pfam" id="PF00032">
    <property type="entry name" value="Cytochrom_B_C"/>
    <property type="match status" value="1"/>
</dbReference>
<dbReference type="Pfam" id="PF00033">
    <property type="entry name" value="Cytochrome_B"/>
    <property type="match status" value="1"/>
</dbReference>
<dbReference type="PIRSF" id="PIRSF038885">
    <property type="entry name" value="COB"/>
    <property type="match status" value="1"/>
</dbReference>
<dbReference type="SUPFAM" id="SSF81648">
    <property type="entry name" value="a domain/subunit of cytochrome bc1 complex (Ubiquinol-cytochrome c reductase)"/>
    <property type="match status" value="1"/>
</dbReference>
<dbReference type="SUPFAM" id="SSF81342">
    <property type="entry name" value="Transmembrane di-heme cytochromes"/>
    <property type="match status" value="1"/>
</dbReference>
<dbReference type="PROSITE" id="PS51003">
    <property type="entry name" value="CYTB_CTER"/>
    <property type="match status" value="1"/>
</dbReference>
<dbReference type="PROSITE" id="PS51002">
    <property type="entry name" value="CYTB_NTER"/>
    <property type="match status" value="1"/>
</dbReference>
<evidence type="ECO:0000250" key="1"/>
<evidence type="ECO:0000250" key="2">
    <source>
        <dbReference type="UniProtKB" id="P00157"/>
    </source>
</evidence>
<evidence type="ECO:0000255" key="3">
    <source>
        <dbReference type="PROSITE-ProRule" id="PRU00967"/>
    </source>
</evidence>
<evidence type="ECO:0000255" key="4">
    <source>
        <dbReference type="PROSITE-ProRule" id="PRU00968"/>
    </source>
</evidence>
<sequence length="379" mass="42609">MTNLRKTHPLMKIINSSFIDLPAPSNISSWWNFGSLLGVCLIVQILTGLFLAMHYTSDTMTAFSSVTHICRDVNYGWLIRYLHANGASMFFICLFLHVGRGLYYGSYMFLETWNIGVLLLFAVMATAFMGYVLPWGQMSFWGATVITNLLSAIPYIGSDLVEWIWGGFSVDKATLTRFFAFHFILPFIIAALAGVHLLFLHETGSNNPSGLCSDADKIPFHPYYTIKDILGVLLLILVLTSLVLFAPDLLGDPDNYTPANPLNTPPHIKPEWYFLFAYAILRSIPNKLGGVLALVLSILVLAVIPFLHTSKQRSMMFRPFSQCLFWILVADLLTLTWIGGQPVEHPFIIIGQLASILYFLLILVLMPITSLFENNLLKW</sequence>
<gene>
    <name type="primary">MT-CYB</name>
    <name type="synonym">COB</name>
    <name type="synonym">CYTB</name>
    <name type="synonym">MTCYB</name>
</gene>
<comment type="function">
    <text evidence="2">Component of the ubiquinol-cytochrome c reductase complex (complex III or cytochrome b-c1 complex) that is part of the mitochondrial respiratory chain. The b-c1 complex mediates electron transfer from ubiquinol to cytochrome c. Contributes to the generation of a proton gradient across the mitochondrial membrane that is then used for ATP synthesis.</text>
</comment>
<comment type="cofactor">
    <cofactor evidence="2">
        <name>heme b</name>
        <dbReference type="ChEBI" id="CHEBI:60344"/>
    </cofactor>
    <text evidence="2">Binds 2 heme b groups non-covalently.</text>
</comment>
<comment type="subunit">
    <text evidence="2">The cytochrome bc1 complex contains 11 subunits: 3 respiratory subunits (MT-CYB, CYC1 and UQCRFS1), 2 core proteins (UQCRC1 and UQCRC2) and 6 low-molecular weight proteins (UQCRH/QCR6, UQCRB/QCR7, UQCRQ/QCR8, UQCR10/QCR9, UQCR11/QCR10 and a cleavage product of UQCRFS1). This cytochrome bc1 complex then forms a dimer.</text>
</comment>
<comment type="subcellular location">
    <subcellularLocation>
        <location evidence="2">Mitochondrion inner membrane</location>
        <topology evidence="2">Multi-pass membrane protein</topology>
    </subcellularLocation>
</comment>
<comment type="miscellaneous">
    <text evidence="1">Heme 1 (or BL or b562) is low-potential and absorbs at about 562 nm, and heme 2 (or BH or b566) is high-potential and absorbs at about 566 nm.</text>
</comment>
<comment type="similarity">
    <text evidence="3 4">Belongs to the cytochrome b family.</text>
</comment>
<comment type="caution">
    <text evidence="2">The full-length protein contains only eight transmembrane helices, not nine as predicted by bioinformatics tools.</text>
</comment>
<reference key="1">
    <citation type="journal article" date="2003" name="J. Mammal.">
        <title>Phylogenetic diversification within the Sorex cinereus group (Soricidae).</title>
        <authorList>
            <person name="Demboski J.R."/>
            <person name="Cook J.A."/>
        </authorList>
    </citation>
    <scope>NUCLEOTIDE SEQUENCE [GENOMIC DNA]</scope>
    <source>
        <strain>Isolate AFTC 24263</strain>
    </source>
</reference>
<reference key="2">
    <citation type="journal article" date="1999" name="Mol. Phylogenet. Evol.">
        <title>Molecular phylogeny and evolution of Sorex shrews (Soricidae: Insectivora) inferred from mitochondrial DNA sequence data.</title>
        <authorList>
            <person name="Fumagalli L."/>
            <person name="Taberlet P."/>
            <person name="Stewart D.T."/>
            <person name="Gielly L."/>
            <person name="Hausser J."/>
            <person name="Vogel P."/>
        </authorList>
    </citation>
    <scope>NUCLEOTIDE SEQUENCE [GENOMIC DNA] OF 44-379</scope>
</reference>
<accession>O80019</accession>
<accession>Q9MNV5</accession>
<name>CYB_SORVA</name>
<feature type="chain" id="PRO_0000061587" description="Cytochrome b">
    <location>
        <begin position="1"/>
        <end position="379"/>
    </location>
</feature>
<feature type="transmembrane region" description="Helical" evidence="2">
    <location>
        <begin position="33"/>
        <end position="53"/>
    </location>
</feature>
<feature type="transmembrane region" description="Helical" evidence="2">
    <location>
        <begin position="77"/>
        <end position="98"/>
    </location>
</feature>
<feature type="transmembrane region" description="Helical" evidence="2">
    <location>
        <begin position="113"/>
        <end position="133"/>
    </location>
</feature>
<feature type="transmembrane region" description="Helical" evidence="2">
    <location>
        <begin position="178"/>
        <end position="198"/>
    </location>
</feature>
<feature type="transmembrane region" description="Helical" evidence="2">
    <location>
        <begin position="226"/>
        <end position="246"/>
    </location>
</feature>
<feature type="transmembrane region" description="Helical" evidence="2">
    <location>
        <begin position="288"/>
        <end position="308"/>
    </location>
</feature>
<feature type="transmembrane region" description="Helical" evidence="2">
    <location>
        <begin position="320"/>
        <end position="340"/>
    </location>
</feature>
<feature type="transmembrane region" description="Helical" evidence="2">
    <location>
        <begin position="347"/>
        <end position="367"/>
    </location>
</feature>
<feature type="binding site" description="axial binding residue" evidence="2">
    <location>
        <position position="83"/>
    </location>
    <ligand>
        <name>heme b</name>
        <dbReference type="ChEBI" id="CHEBI:60344"/>
        <label>b562</label>
    </ligand>
    <ligandPart>
        <name>Fe</name>
        <dbReference type="ChEBI" id="CHEBI:18248"/>
    </ligandPart>
</feature>
<feature type="binding site" description="axial binding residue" evidence="2">
    <location>
        <position position="97"/>
    </location>
    <ligand>
        <name>heme b</name>
        <dbReference type="ChEBI" id="CHEBI:60344"/>
        <label>b566</label>
    </ligand>
    <ligandPart>
        <name>Fe</name>
        <dbReference type="ChEBI" id="CHEBI:18248"/>
    </ligandPart>
</feature>
<feature type="binding site" description="axial binding residue" evidence="2">
    <location>
        <position position="182"/>
    </location>
    <ligand>
        <name>heme b</name>
        <dbReference type="ChEBI" id="CHEBI:60344"/>
        <label>b562</label>
    </ligand>
    <ligandPart>
        <name>Fe</name>
        <dbReference type="ChEBI" id="CHEBI:18248"/>
    </ligandPart>
</feature>
<feature type="binding site" description="axial binding residue" evidence="2">
    <location>
        <position position="196"/>
    </location>
    <ligand>
        <name>heme b</name>
        <dbReference type="ChEBI" id="CHEBI:60344"/>
        <label>b566</label>
    </ligand>
    <ligandPart>
        <name>Fe</name>
        <dbReference type="ChEBI" id="CHEBI:18248"/>
    </ligandPart>
</feature>
<feature type="binding site" evidence="2">
    <location>
        <position position="201"/>
    </location>
    <ligand>
        <name>a ubiquinone</name>
        <dbReference type="ChEBI" id="CHEBI:16389"/>
    </ligand>
</feature>